<feature type="chain" id="PRO_0000287803" description="Bifunctional chorismate mutase/prephenate dehydratase">
    <location>
        <begin position="1"/>
        <end position="365"/>
    </location>
</feature>
<feature type="domain" description="Chorismate mutase" evidence="3">
    <location>
        <begin position="1"/>
        <end position="96"/>
    </location>
</feature>
<feature type="domain" description="Prephenate dehydratase" evidence="4">
    <location>
        <begin position="97"/>
        <end position="272"/>
    </location>
</feature>
<feature type="domain" description="ACT" evidence="5">
    <location>
        <begin position="284"/>
        <end position="361"/>
    </location>
</feature>
<feature type="binding site" evidence="1">
    <location>
        <position position="11"/>
    </location>
    <ligand>
        <name>substrate</name>
    </ligand>
</feature>
<feature type="binding site" evidence="1">
    <location>
        <position position="28"/>
    </location>
    <ligand>
        <name>substrate</name>
    </ligand>
</feature>
<feature type="binding site" evidence="1">
    <location>
        <position position="39"/>
    </location>
    <ligand>
        <name>substrate</name>
    </ligand>
</feature>
<feature type="binding site" evidence="1">
    <location>
        <position position="57"/>
    </location>
    <ligand>
        <name>substrate</name>
    </ligand>
</feature>
<feature type="site" description="Essential for prephenate dehydratase activity" evidence="2">
    <location>
        <position position="265"/>
    </location>
</feature>
<name>CMPDT_PSEAE</name>
<accession>Q9HZ67</accession>
<comment type="function">
    <text evidence="1">Catalyzes the Claisen rearrangement of chorismate to prephenate and the decarboxylation/dehydration of prephenate to phenylpyruvate.</text>
</comment>
<comment type="catalytic activity">
    <reaction evidence="1">
        <text>chorismate = prephenate</text>
        <dbReference type="Rhea" id="RHEA:13897"/>
        <dbReference type="ChEBI" id="CHEBI:29748"/>
        <dbReference type="ChEBI" id="CHEBI:29934"/>
        <dbReference type="EC" id="5.4.99.5"/>
    </reaction>
</comment>
<comment type="catalytic activity">
    <reaction evidence="1">
        <text>prephenate + H(+) = 3-phenylpyruvate + CO2 + H2O</text>
        <dbReference type="Rhea" id="RHEA:21648"/>
        <dbReference type="ChEBI" id="CHEBI:15377"/>
        <dbReference type="ChEBI" id="CHEBI:15378"/>
        <dbReference type="ChEBI" id="CHEBI:16526"/>
        <dbReference type="ChEBI" id="CHEBI:18005"/>
        <dbReference type="ChEBI" id="CHEBI:29934"/>
        <dbReference type="EC" id="4.2.1.51"/>
    </reaction>
</comment>
<comment type="pathway">
    <text evidence="1">Amino-acid biosynthesis; L-phenylalanine biosynthesis; phenylpyruvate from prephenate: step 1/1.</text>
</comment>
<comment type="pathway">
    <text evidence="1">Metabolic intermediate biosynthesis; prephenate biosynthesis; prephenate from chorismate: step 1/1.</text>
</comment>
<comment type="subcellular location">
    <subcellularLocation>
        <location evidence="1">Cytoplasm</location>
    </subcellularLocation>
</comment>
<protein>
    <recommendedName>
        <fullName evidence="1">Bifunctional chorismate mutase/prephenate dehydratase</fullName>
    </recommendedName>
    <alternativeName>
        <fullName evidence="1">Chorismate mutase-prephenate dehydratase</fullName>
    </alternativeName>
    <alternativeName>
        <fullName evidence="1">P-protein</fullName>
    </alternativeName>
    <domain>
        <recommendedName>
            <fullName evidence="1">Chorismate mutase</fullName>
            <shortName evidence="1">CM</shortName>
            <ecNumber evidence="1">5.4.99.5</ecNumber>
        </recommendedName>
    </domain>
    <domain>
        <recommendedName>
            <fullName evidence="1">Prephenate dehydratase</fullName>
            <shortName evidence="1">PDT</shortName>
            <ecNumber evidence="1">4.2.1.51</ecNumber>
        </recommendedName>
    </domain>
</protein>
<reference key="1">
    <citation type="journal article" date="2000" name="Nature">
        <title>Complete genome sequence of Pseudomonas aeruginosa PAO1, an opportunistic pathogen.</title>
        <authorList>
            <person name="Stover C.K."/>
            <person name="Pham X.-Q.T."/>
            <person name="Erwin A.L."/>
            <person name="Mizoguchi S.D."/>
            <person name="Warrener P."/>
            <person name="Hickey M.J."/>
            <person name="Brinkman F.S.L."/>
            <person name="Hufnagle W.O."/>
            <person name="Kowalik D.J."/>
            <person name="Lagrou M."/>
            <person name="Garber R.L."/>
            <person name="Goltry L."/>
            <person name="Tolentino E."/>
            <person name="Westbrock-Wadman S."/>
            <person name="Yuan Y."/>
            <person name="Brody L.L."/>
            <person name="Coulter S.N."/>
            <person name="Folger K.R."/>
            <person name="Kas A."/>
            <person name="Larbig K."/>
            <person name="Lim R.M."/>
            <person name="Smith K.A."/>
            <person name="Spencer D.H."/>
            <person name="Wong G.K.-S."/>
            <person name="Wu Z."/>
            <person name="Paulsen I.T."/>
            <person name="Reizer J."/>
            <person name="Saier M.H. Jr."/>
            <person name="Hancock R.E.W."/>
            <person name="Lory S."/>
            <person name="Olson M.V."/>
        </authorList>
    </citation>
    <scope>NUCLEOTIDE SEQUENCE [LARGE SCALE GENOMIC DNA]</scope>
    <source>
        <strain>ATCC 15692 / DSM 22644 / CIP 104116 / JCM 14847 / LMG 12228 / 1C / PRS 101 / PAO1</strain>
    </source>
</reference>
<evidence type="ECO:0000250" key="1">
    <source>
        <dbReference type="UniProtKB" id="P0A9J8"/>
    </source>
</evidence>
<evidence type="ECO:0000255" key="2"/>
<evidence type="ECO:0000255" key="3">
    <source>
        <dbReference type="PROSITE-ProRule" id="PRU00515"/>
    </source>
</evidence>
<evidence type="ECO:0000255" key="4">
    <source>
        <dbReference type="PROSITE-ProRule" id="PRU00517"/>
    </source>
</evidence>
<evidence type="ECO:0000255" key="5">
    <source>
        <dbReference type="PROSITE-ProRule" id="PRU01007"/>
    </source>
</evidence>
<dbReference type="EC" id="5.4.99.5" evidence="1"/>
<dbReference type="EC" id="4.2.1.51" evidence="1"/>
<dbReference type="EMBL" id="AE004091">
    <property type="protein sequence ID" value="AAG06554.1"/>
    <property type="molecule type" value="Genomic_DNA"/>
</dbReference>
<dbReference type="PIR" id="G83250">
    <property type="entry name" value="G83250"/>
</dbReference>
<dbReference type="RefSeq" id="NP_251856.1">
    <property type="nucleotide sequence ID" value="NC_002516.2"/>
</dbReference>
<dbReference type="RefSeq" id="WP_003091446.1">
    <property type="nucleotide sequence ID" value="NZ_QZGE01000023.1"/>
</dbReference>
<dbReference type="SMR" id="Q9HZ67"/>
<dbReference type="FunCoup" id="Q9HZ67">
    <property type="interactions" value="583"/>
</dbReference>
<dbReference type="STRING" id="208964.PA3166"/>
<dbReference type="PaxDb" id="208964-PA3166"/>
<dbReference type="DNASU" id="882699"/>
<dbReference type="GeneID" id="882699"/>
<dbReference type="KEGG" id="pae:PA3166"/>
<dbReference type="PATRIC" id="fig|208964.12.peg.3309"/>
<dbReference type="PseudoCAP" id="PA3166"/>
<dbReference type="HOGENOM" id="CLU_035008_0_1_6"/>
<dbReference type="InParanoid" id="Q9HZ67"/>
<dbReference type="OrthoDB" id="9802281at2"/>
<dbReference type="PhylomeDB" id="Q9HZ67"/>
<dbReference type="BioCyc" id="PAER208964:G1FZ6-3226-MONOMER"/>
<dbReference type="SABIO-RK" id="Q9HZ67"/>
<dbReference type="UniPathway" id="UPA00120">
    <property type="reaction ID" value="UER00203"/>
</dbReference>
<dbReference type="UniPathway" id="UPA00121">
    <property type="reaction ID" value="UER00345"/>
</dbReference>
<dbReference type="Proteomes" id="UP000002438">
    <property type="component" value="Chromosome"/>
</dbReference>
<dbReference type="GO" id="GO:0005737">
    <property type="term" value="C:cytoplasm"/>
    <property type="evidence" value="ECO:0000318"/>
    <property type="project" value="GO_Central"/>
</dbReference>
<dbReference type="GO" id="GO:0004106">
    <property type="term" value="F:chorismate mutase activity"/>
    <property type="evidence" value="ECO:0007669"/>
    <property type="project" value="UniProtKB-EC"/>
</dbReference>
<dbReference type="GO" id="GO:0004664">
    <property type="term" value="F:prephenate dehydratase activity"/>
    <property type="evidence" value="ECO:0000318"/>
    <property type="project" value="GO_Central"/>
</dbReference>
<dbReference type="GO" id="GO:0046417">
    <property type="term" value="P:chorismate metabolic process"/>
    <property type="evidence" value="ECO:0007669"/>
    <property type="project" value="InterPro"/>
</dbReference>
<dbReference type="GO" id="GO:0009094">
    <property type="term" value="P:L-phenylalanine biosynthetic process"/>
    <property type="evidence" value="ECO:0000318"/>
    <property type="project" value="GO_Central"/>
</dbReference>
<dbReference type="CDD" id="cd04905">
    <property type="entry name" value="ACT_CM-PDT"/>
    <property type="match status" value="1"/>
</dbReference>
<dbReference type="CDD" id="cd13630">
    <property type="entry name" value="PBP2_PDT_1"/>
    <property type="match status" value="1"/>
</dbReference>
<dbReference type="FunFam" id="3.40.190.10:FF:000029">
    <property type="entry name" value="Chorismate mutase/Prephenate dehydratase"/>
    <property type="match status" value="1"/>
</dbReference>
<dbReference type="FunFam" id="3.40.190.10:FF:000034">
    <property type="entry name" value="Chorismate mutase/prephenate dehydratase"/>
    <property type="match status" value="1"/>
</dbReference>
<dbReference type="FunFam" id="1.20.59.10:FF:000004">
    <property type="entry name" value="Prephenate dehydratase"/>
    <property type="match status" value="1"/>
</dbReference>
<dbReference type="FunFam" id="3.30.70.260:FF:000012">
    <property type="entry name" value="Prephenate dehydratase"/>
    <property type="match status" value="1"/>
</dbReference>
<dbReference type="Gene3D" id="3.30.70.260">
    <property type="match status" value="1"/>
</dbReference>
<dbReference type="Gene3D" id="1.20.59.10">
    <property type="entry name" value="Chorismate mutase"/>
    <property type="match status" value="1"/>
</dbReference>
<dbReference type="Gene3D" id="3.40.190.10">
    <property type="entry name" value="Periplasmic binding protein-like II"/>
    <property type="match status" value="2"/>
</dbReference>
<dbReference type="InterPro" id="IPR045865">
    <property type="entry name" value="ACT-like_dom_sf"/>
</dbReference>
<dbReference type="InterPro" id="IPR002912">
    <property type="entry name" value="ACT_dom"/>
</dbReference>
<dbReference type="InterPro" id="IPR008242">
    <property type="entry name" value="Chor_mutase/pphenate_deHydtase"/>
</dbReference>
<dbReference type="InterPro" id="IPR036263">
    <property type="entry name" value="Chorismate_II_sf"/>
</dbReference>
<dbReference type="InterPro" id="IPR036979">
    <property type="entry name" value="CM_dom_sf"/>
</dbReference>
<dbReference type="InterPro" id="IPR002701">
    <property type="entry name" value="CM_II_prokaryot"/>
</dbReference>
<dbReference type="InterPro" id="IPR010957">
    <property type="entry name" value="G/b/e-P-prot_chorismate_mutase"/>
</dbReference>
<dbReference type="InterPro" id="IPR001086">
    <property type="entry name" value="Preph_deHydtase"/>
</dbReference>
<dbReference type="InterPro" id="IPR018528">
    <property type="entry name" value="Preph_deHydtase_CS"/>
</dbReference>
<dbReference type="NCBIfam" id="TIGR01807">
    <property type="entry name" value="CM_P2"/>
    <property type="match status" value="1"/>
</dbReference>
<dbReference type="NCBIfam" id="NF008865">
    <property type="entry name" value="PRK11898.1"/>
    <property type="match status" value="1"/>
</dbReference>
<dbReference type="PANTHER" id="PTHR21022">
    <property type="entry name" value="PREPHENATE DEHYDRATASE P PROTEIN"/>
    <property type="match status" value="1"/>
</dbReference>
<dbReference type="PANTHER" id="PTHR21022:SF19">
    <property type="entry name" value="PREPHENATE DEHYDRATASE-RELATED"/>
    <property type="match status" value="1"/>
</dbReference>
<dbReference type="Pfam" id="PF01842">
    <property type="entry name" value="ACT"/>
    <property type="match status" value="1"/>
</dbReference>
<dbReference type="Pfam" id="PF01817">
    <property type="entry name" value="CM_2"/>
    <property type="match status" value="1"/>
</dbReference>
<dbReference type="Pfam" id="PF00800">
    <property type="entry name" value="PDT"/>
    <property type="match status" value="1"/>
</dbReference>
<dbReference type="PIRSF" id="PIRSF001500">
    <property type="entry name" value="Chor_mut_pdt_Ppr"/>
    <property type="match status" value="1"/>
</dbReference>
<dbReference type="SMART" id="SM00830">
    <property type="entry name" value="CM_2"/>
    <property type="match status" value="1"/>
</dbReference>
<dbReference type="SUPFAM" id="SSF55021">
    <property type="entry name" value="ACT-like"/>
    <property type="match status" value="1"/>
</dbReference>
<dbReference type="SUPFAM" id="SSF48600">
    <property type="entry name" value="Chorismate mutase II"/>
    <property type="match status" value="1"/>
</dbReference>
<dbReference type="SUPFAM" id="SSF53850">
    <property type="entry name" value="Periplasmic binding protein-like II"/>
    <property type="match status" value="1"/>
</dbReference>
<dbReference type="PROSITE" id="PS51671">
    <property type="entry name" value="ACT"/>
    <property type="match status" value="1"/>
</dbReference>
<dbReference type="PROSITE" id="PS51168">
    <property type="entry name" value="CHORISMATE_MUT_2"/>
    <property type="match status" value="1"/>
</dbReference>
<dbReference type="PROSITE" id="PS00857">
    <property type="entry name" value="PREPHENATE_DEHYDR_1"/>
    <property type="match status" value="1"/>
</dbReference>
<dbReference type="PROSITE" id="PS00858">
    <property type="entry name" value="PREPHENATE_DEHYDR_2"/>
    <property type="match status" value="1"/>
</dbReference>
<dbReference type="PROSITE" id="PS51171">
    <property type="entry name" value="PREPHENATE_DEHYDR_3"/>
    <property type="match status" value="1"/>
</dbReference>
<proteinExistence type="inferred from homology"/>
<keyword id="KW-0028">Amino-acid biosynthesis</keyword>
<keyword id="KW-0057">Aromatic amino acid biosynthesis</keyword>
<keyword id="KW-0963">Cytoplasm</keyword>
<keyword id="KW-0413">Isomerase</keyword>
<keyword id="KW-0456">Lyase</keyword>
<keyword id="KW-0511">Multifunctional enzyme</keyword>
<keyword id="KW-0584">Phenylalanine biosynthesis</keyword>
<keyword id="KW-1185">Reference proteome</keyword>
<gene>
    <name type="primary">pheA</name>
    <name type="ordered locus">PA3166</name>
</gene>
<sequence length="365" mass="40632">MADQDQLKALRLRIDSLDEKLLELISERARCAQDVARVKTQTLGEGEAPVFYRPEREAWVLKHIMQLNKGPLDNEEVARLFREIMSSCLALEQPLKVAYLGPEGTFTQAAALKHFGNAVISTPMAAIDEVFREVAAGAVNFGVVPVENSTEGAVNHTLDSFLEHDMVICGEVELRIHHHLLVGETTKTDNITRIYSHAQSLAQCRKWLDSHYPSVERVAVSSNADAAKRVKSEWNSAAIAGDMAASLYDLSKLHEKIEDRPDNSTRFLIIGNQEVPPTGDDKTSIIVSMRNKPGALHELLVPFHNNGIDLTRIETRPSRSGKWTYVFFIDFVGHHKEPLIKDVLEKIGQEAVALKVLGSYPKAVL</sequence>
<organism>
    <name type="scientific">Pseudomonas aeruginosa (strain ATCC 15692 / DSM 22644 / CIP 104116 / JCM 14847 / LMG 12228 / 1C / PRS 101 / PAO1)</name>
    <dbReference type="NCBI Taxonomy" id="208964"/>
    <lineage>
        <taxon>Bacteria</taxon>
        <taxon>Pseudomonadati</taxon>
        <taxon>Pseudomonadota</taxon>
        <taxon>Gammaproteobacteria</taxon>
        <taxon>Pseudomonadales</taxon>
        <taxon>Pseudomonadaceae</taxon>
        <taxon>Pseudomonas</taxon>
    </lineage>
</organism>